<sequence length="644" mass="71881">MGIQILPPQLANQIAAGEVVERPASVVKELVENSLDAGATRIDIEIDKGGSKLIKIRDNGSGIPKDELALALSRHATSKLHSLDDLEAILSFGFRGEALASISSVSRLTLTSRTAEQTEAWQAYAEGVDMAVKVMPAAHPVGSTIEVVDLFFNTPARRRFLKSDKTEFTHIDEWLKRIALVRGDIHFTLTHNGKTVRNYRPAMNEPQYLQRLTQVAGRQFADEALRVECQHDDLRLSGYLQSPWSTVLTDTHYFYVNGRLVRDRLVNHAVRQAFAQKAEVEQPGYVLMLDIDPHQVDVNVHPAKHEVRFHQSRYVHDYILQALQSALEEAGELGFERPFEPSSPQVRDEVSLSESGAQTQTEHHAFELQSPESKTHSTWDEASRVDTSRAEISRDSSLGERTRDIASTRPYAGVQSNAYGSMAVPRESRSGSTGESRARAELPSKVAIASYGELLQTPSYNVQDKPYQPVLAMPAILNGQYWVLAQEQNLSLLPIQSVALATRSHEIETKLATGLIGQPLLMPVSIAADTDWPALLEEHETLIRQLGLELTIRYQQLIIKKVPPYLRDSQLAKVIPEWLQSLRFEAPAPNALAVWLAEQSLTGFTSAADIWAAYCQLTEEKRQQIADKAVSLPWQSWLEEQAIE</sequence>
<gene>
    <name evidence="1" type="primary">mutL</name>
    <name type="ordered locus">Shewmr7_3434</name>
</gene>
<organism>
    <name type="scientific">Shewanella sp. (strain MR-7)</name>
    <dbReference type="NCBI Taxonomy" id="60481"/>
    <lineage>
        <taxon>Bacteria</taxon>
        <taxon>Pseudomonadati</taxon>
        <taxon>Pseudomonadota</taxon>
        <taxon>Gammaproteobacteria</taxon>
        <taxon>Alteromonadales</taxon>
        <taxon>Shewanellaceae</taxon>
        <taxon>Shewanella</taxon>
    </lineage>
</organism>
<proteinExistence type="inferred from homology"/>
<accession>Q0HR40</accession>
<feature type="chain" id="PRO_1000076720" description="DNA mismatch repair protein MutL">
    <location>
        <begin position="1"/>
        <end position="644"/>
    </location>
</feature>
<feature type="region of interest" description="Disordered" evidence="2">
    <location>
        <begin position="336"/>
        <end position="400"/>
    </location>
</feature>
<feature type="compositionally biased region" description="Basic and acidic residues" evidence="2">
    <location>
        <begin position="373"/>
        <end position="400"/>
    </location>
</feature>
<name>MUTL_SHESR</name>
<protein>
    <recommendedName>
        <fullName evidence="1">DNA mismatch repair protein MutL</fullName>
    </recommendedName>
</protein>
<comment type="function">
    <text evidence="1">This protein is involved in the repair of mismatches in DNA. It is required for dam-dependent methyl-directed DNA mismatch repair. May act as a 'molecular matchmaker', a protein that promotes the formation of a stable complex between two or more DNA-binding proteins in an ATP-dependent manner without itself being part of a final effector complex.</text>
</comment>
<comment type="similarity">
    <text evidence="1">Belongs to the DNA mismatch repair MutL/HexB family.</text>
</comment>
<keyword id="KW-0227">DNA damage</keyword>
<keyword id="KW-0234">DNA repair</keyword>
<reference key="1">
    <citation type="submission" date="2006-08" db="EMBL/GenBank/DDBJ databases">
        <title>Complete sequence of chromosome 1 of Shewanella sp. MR-7.</title>
        <authorList>
            <person name="Copeland A."/>
            <person name="Lucas S."/>
            <person name="Lapidus A."/>
            <person name="Barry K."/>
            <person name="Detter J.C."/>
            <person name="Glavina del Rio T."/>
            <person name="Hammon N."/>
            <person name="Israni S."/>
            <person name="Dalin E."/>
            <person name="Tice H."/>
            <person name="Pitluck S."/>
            <person name="Kiss H."/>
            <person name="Brettin T."/>
            <person name="Bruce D."/>
            <person name="Han C."/>
            <person name="Tapia R."/>
            <person name="Gilna P."/>
            <person name="Schmutz J."/>
            <person name="Larimer F."/>
            <person name="Land M."/>
            <person name="Hauser L."/>
            <person name="Kyrpides N."/>
            <person name="Mikhailova N."/>
            <person name="Nealson K."/>
            <person name="Konstantinidis K."/>
            <person name="Klappenbach J."/>
            <person name="Tiedje J."/>
            <person name="Richardson P."/>
        </authorList>
    </citation>
    <scope>NUCLEOTIDE SEQUENCE [LARGE SCALE GENOMIC DNA]</scope>
    <source>
        <strain>MR-7</strain>
    </source>
</reference>
<evidence type="ECO:0000255" key="1">
    <source>
        <dbReference type="HAMAP-Rule" id="MF_00149"/>
    </source>
</evidence>
<evidence type="ECO:0000256" key="2">
    <source>
        <dbReference type="SAM" id="MobiDB-lite"/>
    </source>
</evidence>
<dbReference type="EMBL" id="CP000444">
    <property type="protein sequence ID" value="ABI44415.1"/>
    <property type="molecule type" value="Genomic_DNA"/>
</dbReference>
<dbReference type="SMR" id="Q0HR40"/>
<dbReference type="KEGG" id="shm:Shewmr7_3434"/>
<dbReference type="HOGENOM" id="CLU_004131_4_2_6"/>
<dbReference type="GO" id="GO:0032300">
    <property type="term" value="C:mismatch repair complex"/>
    <property type="evidence" value="ECO:0007669"/>
    <property type="project" value="InterPro"/>
</dbReference>
<dbReference type="GO" id="GO:0005524">
    <property type="term" value="F:ATP binding"/>
    <property type="evidence" value="ECO:0007669"/>
    <property type="project" value="InterPro"/>
</dbReference>
<dbReference type="GO" id="GO:0016887">
    <property type="term" value="F:ATP hydrolysis activity"/>
    <property type="evidence" value="ECO:0007669"/>
    <property type="project" value="InterPro"/>
</dbReference>
<dbReference type="GO" id="GO:0140664">
    <property type="term" value="F:ATP-dependent DNA damage sensor activity"/>
    <property type="evidence" value="ECO:0007669"/>
    <property type="project" value="InterPro"/>
</dbReference>
<dbReference type="GO" id="GO:0030983">
    <property type="term" value="F:mismatched DNA binding"/>
    <property type="evidence" value="ECO:0007669"/>
    <property type="project" value="InterPro"/>
</dbReference>
<dbReference type="GO" id="GO:0006298">
    <property type="term" value="P:mismatch repair"/>
    <property type="evidence" value="ECO:0007669"/>
    <property type="project" value="UniProtKB-UniRule"/>
</dbReference>
<dbReference type="CDD" id="cd16926">
    <property type="entry name" value="HATPase_MutL-MLH-PMS-like"/>
    <property type="match status" value="1"/>
</dbReference>
<dbReference type="CDD" id="cd03482">
    <property type="entry name" value="MutL_Trans_MutL"/>
    <property type="match status" value="1"/>
</dbReference>
<dbReference type="FunFam" id="3.30.230.10:FF:000013">
    <property type="entry name" value="DNA mismatch repair endonuclease MutL"/>
    <property type="match status" value="1"/>
</dbReference>
<dbReference type="FunFam" id="3.30.565.10:FF:000003">
    <property type="entry name" value="DNA mismatch repair endonuclease MutL"/>
    <property type="match status" value="1"/>
</dbReference>
<dbReference type="Gene3D" id="3.30.230.10">
    <property type="match status" value="1"/>
</dbReference>
<dbReference type="Gene3D" id="3.30.565.10">
    <property type="entry name" value="Histidine kinase-like ATPase, C-terminal domain"/>
    <property type="match status" value="1"/>
</dbReference>
<dbReference type="Gene3D" id="3.30.1370.100">
    <property type="entry name" value="MutL, C-terminal domain, regulatory subdomain"/>
    <property type="match status" value="1"/>
</dbReference>
<dbReference type="HAMAP" id="MF_00149">
    <property type="entry name" value="DNA_mis_repair"/>
    <property type="match status" value="1"/>
</dbReference>
<dbReference type="InterPro" id="IPR014762">
    <property type="entry name" value="DNA_mismatch_repair_CS"/>
</dbReference>
<dbReference type="InterPro" id="IPR020667">
    <property type="entry name" value="DNA_mismatch_repair_MutL"/>
</dbReference>
<dbReference type="InterPro" id="IPR013507">
    <property type="entry name" value="DNA_mismatch_S5_2-like"/>
</dbReference>
<dbReference type="InterPro" id="IPR036890">
    <property type="entry name" value="HATPase_C_sf"/>
</dbReference>
<dbReference type="InterPro" id="IPR002099">
    <property type="entry name" value="MutL/Mlh/PMS"/>
</dbReference>
<dbReference type="InterPro" id="IPR038973">
    <property type="entry name" value="MutL/Mlh/Pms-like"/>
</dbReference>
<dbReference type="InterPro" id="IPR014790">
    <property type="entry name" value="MutL_C"/>
</dbReference>
<dbReference type="InterPro" id="IPR042121">
    <property type="entry name" value="MutL_C_regsub"/>
</dbReference>
<dbReference type="InterPro" id="IPR037198">
    <property type="entry name" value="MutL_C_sf"/>
</dbReference>
<dbReference type="InterPro" id="IPR020568">
    <property type="entry name" value="Ribosomal_Su5_D2-typ_SF"/>
</dbReference>
<dbReference type="InterPro" id="IPR014721">
    <property type="entry name" value="Ribsml_uS5_D2-typ_fold_subgr"/>
</dbReference>
<dbReference type="NCBIfam" id="TIGR00585">
    <property type="entry name" value="mutl"/>
    <property type="match status" value="1"/>
</dbReference>
<dbReference type="NCBIfam" id="NF000948">
    <property type="entry name" value="PRK00095.1-1"/>
    <property type="match status" value="1"/>
</dbReference>
<dbReference type="PANTHER" id="PTHR10073">
    <property type="entry name" value="DNA MISMATCH REPAIR PROTEIN MLH, PMS, MUTL"/>
    <property type="match status" value="1"/>
</dbReference>
<dbReference type="PANTHER" id="PTHR10073:SF12">
    <property type="entry name" value="DNA MISMATCH REPAIR PROTEIN MLH1"/>
    <property type="match status" value="1"/>
</dbReference>
<dbReference type="Pfam" id="PF01119">
    <property type="entry name" value="DNA_mis_repair"/>
    <property type="match status" value="1"/>
</dbReference>
<dbReference type="Pfam" id="PF13589">
    <property type="entry name" value="HATPase_c_3"/>
    <property type="match status" value="1"/>
</dbReference>
<dbReference type="Pfam" id="PF08676">
    <property type="entry name" value="MutL_C"/>
    <property type="match status" value="1"/>
</dbReference>
<dbReference type="SMART" id="SM01340">
    <property type="entry name" value="DNA_mis_repair"/>
    <property type="match status" value="1"/>
</dbReference>
<dbReference type="SMART" id="SM00853">
    <property type="entry name" value="MutL_C"/>
    <property type="match status" value="1"/>
</dbReference>
<dbReference type="SUPFAM" id="SSF55874">
    <property type="entry name" value="ATPase domain of HSP90 chaperone/DNA topoisomerase II/histidine kinase"/>
    <property type="match status" value="1"/>
</dbReference>
<dbReference type="SUPFAM" id="SSF118116">
    <property type="entry name" value="DNA mismatch repair protein MutL"/>
    <property type="match status" value="1"/>
</dbReference>
<dbReference type="SUPFAM" id="SSF54211">
    <property type="entry name" value="Ribosomal protein S5 domain 2-like"/>
    <property type="match status" value="1"/>
</dbReference>
<dbReference type="PROSITE" id="PS00058">
    <property type="entry name" value="DNA_MISMATCH_REPAIR_1"/>
    <property type="match status" value="1"/>
</dbReference>